<proteinExistence type="inferred from homology"/>
<evidence type="ECO:0000255" key="1">
    <source>
        <dbReference type="HAMAP-Rule" id="MF_00240"/>
    </source>
</evidence>
<accession>B1JBE3</accession>
<reference key="1">
    <citation type="submission" date="2008-02" db="EMBL/GenBank/DDBJ databases">
        <title>Complete sequence of Pseudomonas putida W619.</title>
        <authorList>
            <person name="Copeland A."/>
            <person name="Lucas S."/>
            <person name="Lapidus A."/>
            <person name="Barry K."/>
            <person name="Detter J.C."/>
            <person name="Glavina del Rio T."/>
            <person name="Dalin E."/>
            <person name="Tice H."/>
            <person name="Pitluck S."/>
            <person name="Chain P."/>
            <person name="Malfatti S."/>
            <person name="Shin M."/>
            <person name="Vergez L."/>
            <person name="Schmutz J."/>
            <person name="Larimer F."/>
            <person name="Land M."/>
            <person name="Hauser L."/>
            <person name="Kyrpides N."/>
            <person name="Kim E."/>
            <person name="Taghavi S."/>
            <person name="Vangronsveld D."/>
            <person name="van der Lelie D."/>
            <person name="Richardson P."/>
        </authorList>
    </citation>
    <scope>NUCLEOTIDE SEQUENCE [LARGE SCALE GENOMIC DNA]</scope>
    <source>
        <strain>W619</strain>
    </source>
</reference>
<gene>
    <name evidence="1" type="primary">lolA</name>
    <name type="ordered locus">PputW619_3407</name>
</gene>
<comment type="function">
    <text evidence="1">Participates in the translocation of lipoproteins from the inner membrane to the outer membrane. Only forms a complex with a lipoprotein if the residue after the N-terminal Cys is not an aspartate (The Asp acts as a targeting signal to indicate that the lipoprotein should stay in the inner membrane).</text>
</comment>
<comment type="subunit">
    <text evidence="1">Monomer.</text>
</comment>
<comment type="subcellular location">
    <subcellularLocation>
        <location evidence="1">Periplasm</location>
    </subcellularLocation>
</comment>
<comment type="similarity">
    <text evidence="1">Belongs to the LolA family.</text>
</comment>
<keyword id="KW-0143">Chaperone</keyword>
<keyword id="KW-0574">Periplasm</keyword>
<keyword id="KW-0653">Protein transport</keyword>
<keyword id="KW-0732">Signal</keyword>
<keyword id="KW-0813">Transport</keyword>
<organism>
    <name type="scientific">Pseudomonas putida (strain W619)</name>
    <dbReference type="NCBI Taxonomy" id="390235"/>
    <lineage>
        <taxon>Bacteria</taxon>
        <taxon>Pseudomonadati</taxon>
        <taxon>Pseudomonadota</taxon>
        <taxon>Gammaproteobacteria</taxon>
        <taxon>Pseudomonadales</taxon>
        <taxon>Pseudomonadaceae</taxon>
        <taxon>Pseudomonas</taxon>
    </lineage>
</organism>
<name>LOLA_PSEPW</name>
<sequence length="211" mass="23256">MRAIRMLLVSALTLGSLSATLSAHAGEQDVQRLTQLLEKSQTIEANFSQLTLDAGGTSLQETTGKMTVKRPGLFYWHTDAPQEQVVVSDGKNVTLWDPDLEQATIKKLDVRLNQTPALLLSGDVSKISQSFDITSKEQGEVMDFTLKPTTKDTLFDSLRVSFRRGLINDMQLIDSVGQRTNILFNGVKANQAVPDSTFKFDIPKGADVIKE</sequence>
<dbReference type="EMBL" id="CP000949">
    <property type="protein sequence ID" value="ACA73891.1"/>
    <property type="molecule type" value="Genomic_DNA"/>
</dbReference>
<dbReference type="SMR" id="B1JBE3"/>
<dbReference type="STRING" id="390235.PputW619_3407"/>
<dbReference type="KEGG" id="ppw:PputW619_3407"/>
<dbReference type="eggNOG" id="COG2834">
    <property type="taxonomic scope" value="Bacteria"/>
</dbReference>
<dbReference type="HOGENOM" id="CLU_087560_0_0_6"/>
<dbReference type="OrthoDB" id="9787361at2"/>
<dbReference type="GO" id="GO:0030288">
    <property type="term" value="C:outer membrane-bounded periplasmic space"/>
    <property type="evidence" value="ECO:0007669"/>
    <property type="project" value="TreeGrafter"/>
</dbReference>
<dbReference type="GO" id="GO:0044874">
    <property type="term" value="P:lipoprotein localization to outer membrane"/>
    <property type="evidence" value="ECO:0007669"/>
    <property type="project" value="UniProtKB-UniRule"/>
</dbReference>
<dbReference type="GO" id="GO:0042953">
    <property type="term" value="P:lipoprotein transport"/>
    <property type="evidence" value="ECO:0007669"/>
    <property type="project" value="InterPro"/>
</dbReference>
<dbReference type="CDD" id="cd16325">
    <property type="entry name" value="LolA"/>
    <property type="match status" value="1"/>
</dbReference>
<dbReference type="Gene3D" id="2.50.20.10">
    <property type="entry name" value="Lipoprotein localisation LolA/LolB/LppX"/>
    <property type="match status" value="1"/>
</dbReference>
<dbReference type="HAMAP" id="MF_00240">
    <property type="entry name" value="LolA"/>
    <property type="match status" value="1"/>
</dbReference>
<dbReference type="InterPro" id="IPR029046">
    <property type="entry name" value="LolA/LolB/LppX"/>
</dbReference>
<dbReference type="InterPro" id="IPR004564">
    <property type="entry name" value="OM_lipoprot_carrier_LolA-like"/>
</dbReference>
<dbReference type="InterPro" id="IPR018323">
    <property type="entry name" value="OM_lipoprot_carrier_LolA_Pbac"/>
</dbReference>
<dbReference type="NCBIfam" id="TIGR00547">
    <property type="entry name" value="lolA"/>
    <property type="match status" value="1"/>
</dbReference>
<dbReference type="PANTHER" id="PTHR35869">
    <property type="entry name" value="OUTER-MEMBRANE LIPOPROTEIN CARRIER PROTEIN"/>
    <property type="match status" value="1"/>
</dbReference>
<dbReference type="PANTHER" id="PTHR35869:SF1">
    <property type="entry name" value="OUTER-MEMBRANE LIPOPROTEIN CARRIER PROTEIN"/>
    <property type="match status" value="1"/>
</dbReference>
<dbReference type="Pfam" id="PF03548">
    <property type="entry name" value="LolA"/>
    <property type="match status" value="1"/>
</dbReference>
<dbReference type="SUPFAM" id="SSF89392">
    <property type="entry name" value="Prokaryotic lipoproteins and lipoprotein localization factors"/>
    <property type="match status" value="1"/>
</dbReference>
<feature type="signal peptide" evidence="1">
    <location>
        <begin position="1"/>
        <end position="25"/>
    </location>
</feature>
<feature type="chain" id="PRO_5000315241" description="Outer-membrane lipoprotein carrier protein">
    <location>
        <begin position="26"/>
        <end position="211"/>
    </location>
</feature>
<protein>
    <recommendedName>
        <fullName evidence="1">Outer-membrane lipoprotein carrier protein</fullName>
    </recommendedName>
</protein>